<comment type="function">
    <text evidence="1">Required for diploid filamentous growth, haploid invasive growth and flocculation. Putative transcriptional activator of FLO1 (By similarity).</text>
</comment>
<comment type="subcellular location">
    <subcellularLocation>
        <location evidence="1">Nucleus</location>
    </subcellularLocation>
</comment>
<comment type="similarity">
    <text evidence="4">Belongs to the FLO8 family.</text>
</comment>
<organism>
    <name type="scientific">Saccharomyces cerevisiae (strain YJM789)</name>
    <name type="common">Baker's yeast</name>
    <dbReference type="NCBI Taxonomy" id="307796"/>
    <lineage>
        <taxon>Eukaryota</taxon>
        <taxon>Fungi</taxon>
        <taxon>Dikarya</taxon>
        <taxon>Ascomycota</taxon>
        <taxon>Saccharomycotina</taxon>
        <taxon>Saccharomycetes</taxon>
        <taxon>Saccharomycetales</taxon>
        <taxon>Saccharomycetaceae</taxon>
        <taxon>Saccharomyces</taxon>
    </lineage>
</organism>
<sequence>MSYKVNSSYPDSIPPTEQPYMASQYKQDLQSNIAMATNSEQQRQQQQQQQQQQQQWINQPTAENSDLKEKMNCKNTLNEYIFDFLTKSSLKNTAAAFAQDAHLDRDKGQNPVDGPKSKENNGNQNTFSKVVDTPQGFLYEWWQIFWDIFNTSSSRGGSEFAQQYYQLVLQEQRQEQIYRSLAVHAARLQHDAERRGEYSNEDIDPMHLAAMMLGNPMAPAVQMRNVNMNPIPIPMVGNPIVNNFSIPPYNNANPTTGTTAVAPTAPPSGDFTNVGPTQNRSQNVTGWPVYNYPMQPTTENPVGNPCNNNTTNNTTNNKSPVNQPKSLKTMHSTDKPNNVPTSKSTRSRSATSKAKGKVKAGLVAKRRRKNNTATVSAGSTNAGSPNITTPGSTTSEPAMVGSRVNKTPRSDIATNFRNQAIIFGEEDIYSNSKSSPSLDGASPSALASKQPTKVRKNTKKASTSAFPVESTNKLGGNSVVTGKKRSPPNTRVSRRKSTPSVILNADATKDENNMLRTFSNTIAPNIHSAPPTKTANSLPFPGINLGSFNKPAVSSPLSSVTESCFDPESGKIAGKNGPKRAVNSKVSASSPLSIATPRSGDAQKQRSSKVPGNVVIKPPHGFSTTNLNITLKNSKIITSQNNTVSQELPNGGNILEAQVGNDSRSSKGNRNTLSTPEEKKPSSNNQGYDFDALKNSSSLLFPNQAYASNNRTPNENSNVADETSASTNSGDNDNTLIQPSSNVGTTLGPQQTSTNENQNVHSQNLKFGNIGMVEDQGPDYDLNLLDTNENDFNFINWEG</sequence>
<name>FLO8_YEAS7</name>
<evidence type="ECO:0000250" key="1"/>
<evidence type="ECO:0000255" key="2">
    <source>
        <dbReference type="PROSITE-ProRule" id="PRU00126"/>
    </source>
</evidence>
<evidence type="ECO:0000256" key="3">
    <source>
        <dbReference type="SAM" id="MobiDB-lite"/>
    </source>
</evidence>
<evidence type="ECO:0000305" key="4"/>
<proteinExistence type="inferred from homology"/>
<reference key="1">
    <citation type="journal article" date="2007" name="Proc. Natl. Acad. Sci. U.S.A.">
        <title>Genome sequencing and comparative analysis of Saccharomyces cerevisiae strain YJM789.</title>
        <authorList>
            <person name="Wei W."/>
            <person name="McCusker J.H."/>
            <person name="Hyman R.W."/>
            <person name="Jones T."/>
            <person name="Ning Y."/>
            <person name="Cao Z."/>
            <person name="Gu Z."/>
            <person name="Bruno D."/>
            <person name="Miranda M."/>
            <person name="Nguyen M."/>
            <person name="Wilhelmy J."/>
            <person name="Komp C."/>
            <person name="Tamse R."/>
            <person name="Wang X."/>
            <person name="Jia P."/>
            <person name="Luedi P."/>
            <person name="Oefner P.J."/>
            <person name="David L."/>
            <person name="Dietrich F.S."/>
            <person name="Li Y."/>
            <person name="Davis R.W."/>
            <person name="Steinmetz L.M."/>
        </authorList>
    </citation>
    <scope>NUCLEOTIDE SEQUENCE [LARGE SCALE GENOMIC DNA]</scope>
    <source>
        <strain>YJM789</strain>
    </source>
</reference>
<protein>
    <recommendedName>
        <fullName>Transcriptional activator FLO8</fullName>
    </recommendedName>
    <alternativeName>
        <fullName>Protein PDH5</fullName>
    </alternativeName>
</protein>
<accession>A6ZR64</accession>
<gene>
    <name type="primary">FLO8</name>
    <name type="synonym">PDH5</name>
    <name type="ORF">SCY_1611</name>
</gene>
<keyword id="KW-0010">Activator</keyword>
<keyword id="KW-0539">Nucleus</keyword>
<keyword id="KW-0804">Transcription</keyword>
<keyword id="KW-0805">Transcription regulation</keyword>
<dbReference type="EMBL" id="AAFW02000048">
    <property type="protein sequence ID" value="EDN63084.1"/>
    <property type="molecule type" value="Genomic_DNA"/>
</dbReference>
<dbReference type="SMR" id="A6ZR64"/>
<dbReference type="HOGENOM" id="CLU_351656_0_0_1"/>
<dbReference type="Proteomes" id="UP000007060">
    <property type="component" value="Unassembled WGS sequence"/>
</dbReference>
<dbReference type="GO" id="GO:0005634">
    <property type="term" value="C:nucleus"/>
    <property type="evidence" value="ECO:0007669"/>
    <property type="project" value="UniProtKB-SubCell"/>
</dbReference>
<dbReference type="GO" id="GO:0009889">
    <property type="term" value="P:regulation of biosynthetic process"/>
    <property type="evidence" value="ECO:0007669"/>
    <property type="project" value="UniProtKB-ARBA"/>
</dbReference>
<dbReference type="InterPro" id="IPR006594">
    <property type="entry name" value="LisH"/>
</dbReference>
<dbReference type="PANTHER" id="PTHR45093:SF2">
    <property type="entry name" value="LISH DOMAIN-CONTAINING PROTEIN"/>
    <property type="match status" value="1"/>
</dbReference>
<dbReference type="PANTHER" id="PTHR45093">
    <property type="entry name" value="TRANSCRIPTION ACTIVATOR MSS11"/>
    <property type="match status" value="1"/>
</dbReference>
<dbReference type="SMART" id="SM00667">
    <property type="entry name" value="LisH"/>
    <property type="match status" value="1"/>
</dbReference>
<dbReference type="PROSITE" id="PS50896">
    <property type="entry name" value="LISH"/>
    <property type="match status" value="1"/>
</dbReference>
<feature type="chain" id="PRO_0000392097" description="Transcriptional activator FLO8">
    <location>
        <begin position="1"/>
        <end position="799"/>
    </location>
</feature>
<feature type="domain" description="LisH" evidence="2">
    <location>
        <begin position="73"/>
        <end position="105"/>
    </location>
</feature>
<feature type="region of interest" description="Disordered" evidence="3">
    <location>
        <begin position="1"/>
        <end position="22"/>
    </location>
</feature>
<feature type="region of interest" description="Disordered" evidence="3">
    <location>
        <begin position="37"/>
        <end position="68"/>
    </location>
</feature>
<feature type="region of interest" description="Disordered" evidence="3">
    <location>
        <begin position="101"/>
        <end position="127"/>
    </location>
</feature>
<feature type="region of interest" description="Disordered" evidence="3">
    <location>
        <begin position="255"/>
        <end position="406"/>
    </location>
</feature>
<feature type="region of interest" description="Disordered" evidence="3">
    <location>
        <begin position="431"/>
        <end position="501"/>
    </location>
</feature>
<feature type="region of interest" description="Disordered" evidence="3">
    <location>
        <begin position="568"/>
        <end position="621"/>
    </location>
</feature>
<feature type="region of interest" description="Disordered" evidence="3">
    <location>
        <begin position="644"/>
        <end position="691"/>
    </location>
</feature>
<feature type="region of interest" description="Disordered" evidence="3">
    <location>
        <begin position="705"/>
        <end position="758"/>
    </location>
</feature>
<feature type="compositionally biased region" description="Polar residues" evidence="3">
    <location>
        <begin position="1"/>
        <end position="10"/>
    </location>
</feature>
<feature type="compositionally biased region" description="Low complexity" evidence="3">
    <location>
        <begin position="41"/>
        <end position="55"/>
    </location>
</feature>
<feature type="compositionally biased region" description="Polar residues" evidence="3">
    <location>
        <begin position="270"/>
        <end position="285"/>
    </location>
</feature>
<feature type="compositionally biased region" description="Low complexity" evidence="3">
    <location>
        <begin position="307"/>
        <end position="317"/>
    </location>
</feature>
<feature type="compositionally biased region" description="Polar residues" evidence="3">
    <location>
        <begin position="318"/>
        <end position="340"/>
    </location>
</feature>
<feature type="compositionally biased region" description="Low complexity" evidence="3">
    <location>
        <begin position="341"/>
        <end position="353"/>
    </location>
</feature>
<feature type="compositionally biased region" description="Basic residues" evidence="3">
    <location>
        <begin position="354"/>
        <end position="370"/>
    </location>
</feature>
<feature type="compositionally biased region" description="Polar residues" evidence="3">
    <location>
        <begin position="371"/>
        <end position="396"/>
    </location>
</feature>
<feature type="compositionally biased region" description="Polar residues" evidence="3">
    <location>
        <begin position="460"/>
        <end position="480"/>
    </location>
</feature>
<feature type="compositionally biased region" description="Basic residues" evidence="3">
    <location>
        <begin position="482"/>
        <end position="497"/>
    </location>
</feature>
<feature type="compositionally biased region" description="Polar residues" evidence="3">
    <location>
        <begin position="584"/>
        <end position="593"/>
    </location>
</feature>
<feature type="compositionally biased region" description="Polar residues" evidence="3">
    <location>
        <begin position="660"/>
        <end position="675"/>
    </location>
</feature>